<gene>
    <name evidence="1" type="primary">napA</name>
    <name type="ordered locus">Sde_0084</name>
</gene>
<comment type="function">
    <text evidence="1">Catalytic subunit of the periplasmic nitrate reductase complex NapAB. Receives electrons from NapB and catalyzes the reduction of nitrate to nitrite.</text>
</comment>
<comment type="catalytic activity">
    <reaction evidence="1">
        <text>2 Fe(II)-[cytochrome] + nitrate + 2 H(+) = 2 Fe(III)-[cytochrome] + nitrite + H2O</text>
        <dbReference type="Rhea" id="RHEA:12909"/>
        <dbReference type="Rhea" id="RHEA-COMP:11777"/>
        <dbReference type="Rhea" id="RHEA-COMP:11778"/>
        <dbReference type="ChEBI" id="CHEBI:15377"/>
        <dbReference type="ChEBI" id="CHEBI:15378"/>
        <dbReference type="ChEBI" id="CHEBI:16301"/>
        <dbReference type="ChEBI" id="CHEBI:17632"/>
        <dbReference type="ChEBI" id="CHEBI:29033"/>
        <dbReference type="ChEBI" id="CHEBI:29034"/>
        <dbReference type="EC" id="1.9.6.1"/>
    </reaction>
</comment>
<comment type="cofactor">
    <cofactor evidence="1">
        <name>[4Fe-4S] cluster</name>
        <dbReference type="ChEBI" id="CHEBI:49883"/>
    </cofactor>
    <text evidence="1">Binds 1 [4Fe-4S] cluster.</text>
</comment>
<comment type="cofactor">
    <cofactor evidence="1">
        <name>Mo-bis(molybdopterin guanine dinucleotide)</name>
        <dbReference type="ChEBI" id="CHEBI:60539"/>
    </cofactor>
    <text evidence="1">Binds 1 molybdenum-bis(molybdopterin guanine dinucleotide) (Mo-bis-MGD) cofactor per subunit.</text>
</comment>
<comment type="subunit">
    <text evidence="1">Component of the periplasmic nitrate reductase NapAB complex composed of NapA and NapB.</text>
</comment>
<comment type="subcellular location">
    <subcellularLocation>
        <location evidence="1">Periplasm</location>
    </subcellularLocation>
</comment>
<comment type="PTM">
    <text evidence="1">Predicted to be exported by the Tat system. The position of the signal peptide cleavage has not been experimentally proven.</text>
</comment>
<comment type="similarity">
    <text evidence="1">Belongs to the prokaryotic molybdopterin-containing oxidoreductase family. NasA/NapA/NarB subfamily.</text>
</comment>
<proteinExistence type="inferred from homology"/>
<name>NAPA_SACD2</name>
<accession>Q21PN1</accession>
<organism>
    <name type="scientific">Saccharophagus degradans (strain 2-40 / ATCC 43961 / DSM 17024)</name>
    <dbReference type="NCBI Taxonomy" id="203122"/>
    <lineage>
        <taxon>Bacteria</taxon>
        <taxon>Pseudomonadati</taxon>
        <taxon>Pseudomonadota</taxon>
        <taxon>Gammaproteobacteria</taxon>
        <taxon>Cellvibrionales</taxon>
        <taxon>Cellvibrionaceae</taxon>
        <taxon>Saccharophagus</taxon>
    </lineage>
</organism>
<protein>
    <recommendedName>
        <fullName evidence="1">Periplasmic nitrate reductase</fullName>
        <ecNumber evidence="1">1.9.6.1</ecNumber>
    </recommendedName>
</protein>
<feature type="signal peptide" description="Tat-type signal" evidence="1">
    <location>
        <begin position="1"/>
        <end position="29"/>
    </location>
</feature>
<feature type="chain" id="PRO_0000256076" description="Periplasmic nitrate reductase" evidence="1">
    <location>
        <begin position="30"/>
        <end position="831"/>
    </location>
</feature>
<feature type="domain" description="4Fe-4S Mo/W bis-MGD-type" evidence="1">
    <location>
        <begin position="41"/>
        <end position="97"/>
    </location>
</feature>
<feature type="binding site" evidence="1">
    <location>
        <position position="48"/>
    </location>
    <ligand>
        <name>[4Fe-4S] cluster</name>
        <dbReference type="ChEBI" id="CHEBI:49883"/>
    </ligand>
</feature>
<feature type="binding site" evidence="1">
    <location>
        <position position="51"/>
    </location>
    <ligand>
        <name>[4Fe-4S] cluster</name>
        <dbReference type="ChEBI" id="CHEBI:49883"/>
    </ligand>
</feature>
<feature type="binding site" evidence="1">
    <location>
        <position position="55"/>
    </location>
    <ligand>
        <name>[4Fe-4S] cluster</name>
        <dbReference type="ChEBI" id="CHEBI:49883"/>
    </ligand>
</feature>
<feature type="binding site" evidence="1">
    <location>
        <position position="83"/>
    </location>
    <ligand>
        <name>[4Fe-4S] cluster</name>
        <dbReference type="ChEBI" id="CHEBI:49883"/>
    </ligand>
</feature>
<feature type="binding site" evidence="1">
    <location>
        <position position="85"/>
    </location>
    <ligand>
        <name>Mo-bis(molybdopterin guanine dinucleotide)</name>
        <dbReference type="ChEBI" id="CHEBI:60539"/>
    </ligand>
</feature>
<feature type="binding site" evidence="1">
    <location>
        <position position="152"/>
    </location>
    <ligand>
        <name>Mo-bis(molybdopterin guanine dinucleotide)</name>
        <dbReference type="ChEBI" id="CHEBI:60539"/>
    </ligand>
</feature>
<feature type="binding site" evidence="1">
    <location>
        <position position="177"/>
    </location>
    <ligand>
        <name>Mo-bis(molybdopterin guanine dinucleotide)</name>
        <dbReference type="ChEBI" id="CHEBI:60539"/>
    </ligand>
</feature>
<feature type="binding site" evidence="1">
    <location>
        <position position="181"/>
    </location>
    <ligand>
        <name>Mo-bis(molybdopterin guanine dinucleotide)</name>
        <dbReference type="ChEBI" id="CHEBI:60539"/>
    </ligand>
</feature>
<feature type="binding site" evidence="1">
    <location>
        <begin position="214"/>
        <end position="221"/>
    </location>
    <ligand>
        <name>Mo-bis(molybdopterin guanine dinucleotide)</name>
        <dbReference type="ChEBI" id="CHEBI:60539"/>
    </ligand>
</feature>
<feature type="binding site" evidence="1">
    <location>
        <begin position="245"/>
        <end position="249"/>
    </location>
    <ligand>
        <name>Mo-bis(molybdopterin guanine dinucleotide)</name>
        <dbReference type="ChEBI" id="CHEBI:60539"/>
    </ligand>
</feature>
<feature type="binding site" evidence="1">
    <location>
        <begin position="264"/>
        <end position="266"/>
    </location>
    <ligand>
        <name>Mo-bis(molybdopterin guanine dinucleotide)</name>
        <dbReference type="ChEBI" id="CHEBI:60539"/>
    </ligand>
</feature>
<feature type="binding site" evidence="1">
    <location>
        <position position="375"/>
    </location>
    <ligand>
        <name>Mo-bis(molybdopterin guanine dinucleotide)</name>
        <dbReference type="ChEBI" id="CHEBI:60539"/>
    </ligand>
</feature>
<feature type="binding site" evidence="1">
    <location>
        <position position="379"/>
    </location>
    <ligand>
        <name>Mo-bis(molybdopterin guanine dinucleotide)</name>
        <dbReference type="ChEBI" id="CHEBI:60539"/>
    </ligand>
</feature>
<feature type="binding site" evidence="1">
    <location>
        <position position="485"/>
    </location>
    <ligand>
        <name>Mo-bis(molybdopterin guanine dinucleotide)</name>
        <dbReference type="ChEBI" id="CHEBI:60539"/>
    </ligand>
</feature>
<feature type="binding site" evidence="1">
    <location>
        <begin position="511"/>
        <end position="512"/>
    </location>
    <ligand>
        <name>Mo-bis(molybdopterin guanine dinucleotide)</name>
        <dbReference type="ChEBI" id="CHEBI:60539"/>
    </ligand>
</feature>
<feature type="binding site" evidence="1">
    <location>
        <position position="534"/>
    </location>
    <ligand>
        <name>Mo-bis(molybdopterin guanine dinucleotide)</name>
        <dbReference type="ChEBI" id="CHEBI:60539"/>
    </ligand>
</feature>
<feature type="binding site" evidence="1">
    <location>
        <position position="561"/>
    </location>
    <ligand>
        <name>Mo-bis(molybdopterin guanine dinucleotide)</name>
        <dbReference type="ChEBI" id="CHEBI:60539"/>
    </ligand>
</feature>
<feature type="binding site" evidence="1">
    <location>
        <begin position="721"/>
        <end position="730"/>
    </location>
    <ligand>
        <name>Mo-bis(molybdopterin guanine dinucleotide)</name>
        <dbReference type="ChEBI" id="CHEBI:60539"/>
    </ligand>
</feature>
<feature type="binding site" evidence="1">
    <location>
        <position position="797"/>
    </location>
    <ligand>
        <name>substrate</name>
    </ligand>
</feature>
<feature type="binding site" evidence="1">
    <location>
        <position position="805"/>
    </location>
    <ligand>
        <name>Mo-bis(molybdopterin guanine dinucleotide)</name>
        <dbReference type="ChEBI" id="CHEBI:60539"/>
    </ligand>
</feature>
<feature type="binding site" evidence="1">
    <location>
        <position position="822"/>
    </location>
    <ligand>
        <name>Mo-bis(molybdopterin guanine dinucleotide)</name>
        <dbReference type="ChEBI" id="CHEBI:60539"/>
    </ligand>
</feature>
<keyword id="KW-0004">4Fe-4S</keyword>
<keyword id="KW-0249">Electron transport</keyword>
<keyword id="KW-0408">Iron</keyword>
<keyword id="KW-0411">Iron-sulfur</keyword>
<keyword id="KW-0479">Metal-binding</keyword>
<keyword id="KW-0500">Molybdenum</keyword>
<keyword id="KW-0534">Nitrate assimilation</keyword>
<keyword id="KW-0560">Oxidoreductase</keyword>
<keyword id="KW-0574">Periplasm</keyword>
<keyword id="KW-1185">Reference proteome</keyword>
<keyword id="KW-0732">Signal</keyword>
<keyword id="KW-0813">Transport</keyword>
<evidence type="ECO:0000255" key="1">
    <source>
        <dbReference type="HAMAP-Rule" id="MF_01630"/>
    </source>
</evidence>
<sequence>MTVTRRDFVRHQALATAAAAAGVAVPAAATNIVTTAADNKLVWSKAPCRFCGTGCSVNVATKEGRVVATHGDIKSPVNRGLNCVKGYFLSKVMYGEDRLTQPLLRKKNGVYAKDGEFEPVTWEEAFTIMAEKFKKTLKEKGPEGIGMFGSGQWTVWEGYAASKLMKAGFRSNNIDPNARHCMASAVGGFMRTFGIDEPMGCYDDFEHADAFVLWGSNMAEMHPILWTRIADRRLSYPHVQVAVMSTYEHRSFDLADLGVVFTPQSDLAIANFIANYIIQNKKVNWDFVKKHTNFRVGTTDIGYGLRPEHPLQKAAKNADSAGASEPIDFETYAKFVADYTVEKASEISGVSEDKLIKLAKLYADPNIKVMSLWTMGVNQHTRGVWMNNLIYNIHLLTGKISEPGNSPFSLTGQPSACGTAREVGTFSHRLPADMVVTNPKHRAYAEKIWKLPEGSIPEKVGAHAVLQSRKLKDGEINAYWVQVNNNVQAGPNINEEVLPGYRNPQNFIVVSDAYPTVTAQAADLILPSAMWVEKEGAYGNAERRTQFWHQLVNAPGDARSDLWQLVEFSKYFKVEEVWPADLIAKMPEAKGKTLFDILYKNGKVNKFPLAQVSKDYENKEADAFGFYIQKGLFEEYAEFGRGHGHDLADFDRYHEERGLRWPVVNGEETLWRYREGSDPYVEKGKGVQFYGKPDGKAIIFALPYEPPAESPNKEYPFWLCTGRVIEHWHSGSMTQRVPELYKAFPDAVCFMHPEDARSAGLRRGDKVKLQSIRGHIITRIETRGRNKPPKGLVFVPWFDARQLINKVTLDATDPISKQTDFKKCAVKVERV</sequence>
<dbReference type="EC" id="1.9.6.1" evidence="1"/>
<dbReference type="EMBL" id="CP000282">
    <property type="protein sequence ID" value="ABD79348.1"/>
    <property type="molecule type" value="Genomic_DNA"/>
</dbReference>
<dbReference type="RefSeq" id="WP_011466572.1">
    <property type="nucleotide sequence ID" value="NC_007912.1"/>
</dbReference>
<dbReference type="SMR" id="Q21PN1"/>
<dbReference type="STRING" id="203122.Sde_0084"/>
<dbReference type="GeneID" id="98611800"/>
<dbReference type="KEGG" id="sde:Sde_0084"/>
<dbReference type="eggNOG" id="COG0243">
    <property type="taxonomic scope" value="Bacteria"/>
</dbReference>
<dbReference type="HOGENOM" id="CLU_000422_13_4_6"/>
<dbReference type="OrthoDB" id="9816402at2"/>
<dbReference type="Proteomes" id="UP000001947">
    <property type="component" value="Chromosome"/>
</dbReference>
<dbReference type="GO" id="GO:0016020">
    <property type="term" value="C:membrane"/>
    <property type="evidence" value="ECO:0007669"/>
    <property type="project" value="TreeGrafter"/>
</dbReference>
<dbReference type="GO" id="GO:0009325">
    <property type="term" value="C:nitrate reductase complex"/>
    <property type="evidence" value="ECO:0007669"/>
    <property type="project" value="TreeGrafter"/>
</dbReference>
<dbReference type="GO" id="GO:0042597">
    <property type="term" value="C:periplasmic space"/>
    <property type="evidence" value="ECO:0007669"/>
    <property type="project" value="UniProtKB-SubCell"/>
</dbReference>
<dbReference type="GO" id="GO:0051539">
    <property type="term" value="F:4 iron, 4 sulfur cluster binding"/>
    <property type="evidence" value="ECO:0007669"/>
    <property type="project" value="UniProtKB-KW"/>
</dbReference>
<dbReference type="GO" id="GO:0009055">
    <property type="term" value="F:electron transfer activity"/>
    <property type="evidence" value="ECO:0007669"/>
    <property type="project" value="UniProtKB-UniRule"/>
</dbReference>
<dbReference type="GO" id="GO:0005506">
    <property type="term" value="F:iron ion binding"/>
    <property type="evidence" value="ECO:0007669"/>
    <property type="project" value="UniProtKB-UniRule"/>
</dbReference>
<dbReference type="GO" id="GO:0030151">
    <property type="term" value="F:molybdenum ion binding"/>
    <property type="evidence" value="ECO:0007669"/>
    <property type="project" value="InterPro"/>
</dbReference>
<dbReference type="GO" id="GO:0043546">
    <property type="term" value="F:molybdopterin cofactor binding"/>
    <property type="evidence" value="ECO:0007669"/>
    <property type="project" value="InterPro"/>
</dbReference>
<dbReference type="GO" id="GO:0050140">
    <property type="term" value="F:nitrate reductase (cytochrome) activity"/>
    <property type="evidence" value="ECO:0007669"/>
    <property type="project" value="UniProtKB-EC"/>
</dbReference>
<dbReference type="GO" id="GO:0045333">
    <property type="term" value="P:cellular respiration"/>
    <property type="evidence" value="ECO:0007669"/>
    <property type="project" value="UniProtKB-ARBA"/>
</dbReference>
<dbReference type="GO" id="GO:0006777">
    <property type="term" value="P:Mo-molybdopterin cofactor biosynthetic process"/>
    <property type="evidence" value="ECO:0007669"/>
    <property type="project" value="UniProtKB-UniRule"/>
</dbReference>
<dbReference type="GO" id="GO:0042128">
    <property type="term" value="P:nitrate assimilation"/>
    <property type="evidence" value="ECO:0007669"/>
    <property type="project" value="UniProtKB-UniRule"/>
</dbReference>
<dbReference type="CDD" id="cd02791">
    <property type="entry name" value="MopB_CT_Nitrate-R-NapA-like"/>
    <property type="match status" value="1"/>
</dbReference>
<dbReference type="CDD" id="cd02754">
    <property type="entry name" value="MopB_Nitrate-R-NapA-like"/>
    <property type="match status" value="1"/>
</dbReference>
<dbReference type="FunFam" id="2.40.40.20:FF:000005">
    <property type="entry name" value="Periplasmic nitrate reductase"/>
    <property type="match status" value="1"/>
</dbReference>
<dbReference type="Gene3D" id="2.40.40.20">
    <property type="match status" value="1"/>
</dbReference>
<dbReference type="Gene3D" id="3.30.200.210">
    <property type="match status" value="1"/>
</dbReference>
<dbReference type="Gene3D" id="3.40.50.740">
    <property type="match status" value="1"/>
</dbReference>
<dbReference type="Gene3D" id="3.40.228.10">
    <property type="entry name" value="Dimethylsulfoxide Reductase, domain 2"/>
    <property type="match status" value="1"/>
</dbReference>
<dbReference type="HAMAP" id="MF_01630">
    <property type="entry name" value="Nitrate_reduct_NapA"/>
    <property type="match status" value="1"/>
</dbReference>
<dbReference type="InterPro" id="IPR009010">
    <property type="entry name" value="Asp_de-COase-like_dom_sf"/>
</dbReference>
<dbReference type="InterPro" id="IPR041957">
    <property type="entry name" value="CT_Nitrate-R-NapA-like"/>
</dbReference>
<dbReference type="InterPro" id="IPR006657">
    <property type="entry name" value="MoPterin_dinucl-bd_dom"/>
</dbReference>
<dbReference type="InterPro" id="IPR006656">
    <property type="entry name" value="Mopterin_OxRdtase"/>
</dbReference>
<dbReference type="InterPro" id="IPR006963">
    <property type="entry name" value="Mopterin_OxRdtase_4Fe-4S_dom"/>
</dbReference>
<dbReference type="InterPro" id="IPR027467">
    <property type="entry name" value="MopterinOxRdtase_cofactor_BS"/>
</dbReference>
<dbReference type="InterPro" id="IPR010051">
    <property type="entry name" value="Periplasm_NO3_reductase_lsu"/>
</dbReference>
<dbReference type="InterPro" id="IPR050123">
    <property type="entry name" value="Prok_molybdopt-oxidoreductase"/>
</dbReference>
<dbReference type="InterPro" id="IPR006311">
    <property type="entry name" value="TAT_signal"/>
</dbReference>
<dbReference type="InterPro" id="IPR019546">
    <property type="entry name" value="TAT_signal_bac_arc"/>
</dbReference>
<dbReference type="NCBIfam" id="TIGR01706">
    <property type="entry name" value="NAPA"/>
    <property type="match status" value="1"/>
</dbReference>
<dbReference type="NCBIfam" id="NF010055">
    <property type="entry name" value="PRK13532.1"/>
    <property type="match status" value="1"/>
</dbReference>
<dbReference type="NCBIfam" id="TIGR01409">
    <property type="entry name" value="TAT_signal_seq"/>
    <property type="match status" value="1"/>
</dbReference>
<dbReference type="PANTHER" id="PTHR43105:SF11">
    <property type="entry name" value="PERIPLASMIC NITRATE REDUCTASE"/>
    <property type="match status" value="1"/>
</dbReference>
<dbReference type="PANTHER" id="PTHR43105">
    <property type="entry name" value="RESPIRATORY NITRATE REDUCTASE"/>
    <property type="match status" value="1"/>
</dbReference>
<dbReference type="Pfam" id="PF04879">
    <property type="entry name" value="Molybdop_Fe4S4"/>
    <property type="match status" value="1"/>
</dbReference>
<dbReference type="Pfam" id="PF00384">
    <property type="entry name" value="Molybdopterin"/>
    <property type="match status" value="1"/>
</dbReference>
<dbReference type="Pfam" id="PF01568">
    <property type="entry name" value="Molydop_binding"/>
    <property type="match status" value="1"/>
</dbReference>
<dbReference type="SMART" id="SM00926">
    <property type="entry name" value="Molybdop_Fe4S4"/>
    <property type="match status" value="1"/>
</dbReference>
<dbReference type="SUPFAM" id="SSF50692">
    <property type="entry name" value="ADC-like"/>
    <property type="match status" value="1"/>
</dbReference>
<dbReference type="SUPFAM" id="SSF53706">
    <property type="entry name" value="Formate dehydrogenase/DMSO reductase, domains 1-3"/>
    <property type="match status" value="1"/>
</dbReference>
<dbReference type="PROSITE" id="PS51669">
    <property type="entry name" value="4FE4S_MOW_BIS_MGD"/>
    <property type="match status" value="1"/>
</dbReference>
<dbReference type="PROSITE" id="PS00551">
    <property type="entry name" value="MOLYBDOPTERIN_PROK_1"/>
    <property type="match status" value="1"/>
</dbReference>
<dbReference type="PROSITE" id="PS51318">
    <property type="entry name" value="TAT"/>
    <property type="match status" value="1"/>
</dbReference>
<reference key="1">
    <citation type="journal article" date="2008" name="PLoS Genet.">
        <title>Complete genome sequence of the complex carbohydrate-degrading marine bacterium, Saccharophagus degradans strain 2-40 T.</title>
        <authorList>
            <person name="Weiner R.M."/>
            <person name="Taylor L.E. II"/>
            <person name="Henrissat B."/>
            <person name="Hauser L."/>
            <person name="Land M."/>
            <person name="Coutinho P.M."/>
            <person name="Rancurel C."/>
            <person name="Saunders E.H."/>
            <person name="Longmire A.G."/>
            <person name="Zhang H."/>
            <person name="Bayer E.A."/>
            <person name="Gilbert H.J."/>
            <person name="Larimer F."/>
            <person name="Zhulin I.B."/>
            <person name="Ekborg N.A."/>
            <person name="Lamed R."/>
            <person name="Richardson P.M."/>
            <person name="Borovok I."/>
            <person name="Hutcheson S."/>
        </authorList>
    </citation>
    <scope>NUCLEOTIDE SEQUENCE [LARGE SCALE GENOMIC DNA]</scope>
    <source>
        <strain>2-40 / ATCC 43961 / DSM 17024</strain>
    </source>
</reference>